<feature type="chain" id="PRO_0000210236" description="Syntaxin-4">
    <location>
        <begin position="1"/>
        <end position="333"/>
    </location>
</feature>
<feature type="topological domain" description="Cytoplasmic" evidence="2">
    <location>
        <begin position="1"/>
        <end position="312"/>
    </location>
</feature>
<feature type="transmembrane region" description="Helical; Anchor for type IV membrane protein" evidence="2">
    <location>
        <begin position="313"/>
        <end position="333"/>
    </location>
</feature>
<feature type="domain" description="t-SNARE coiled-coil homology" evidence="3">
    <location>
        <begin position="239"/>
        <end position="301"/>
    </location>
</feature>
<feature type="region of interest" description="Disordered" evidence="4">
    <location>
        <begin position="50"/>
        <end position="81"/>
    </location>
</feature>
<feature type="coiled-coil region" evidence="2">
    <location>
        <begin position="91"/>
        <end position="116"/>
    </location>
</feature>
<feature type="compositionally biased region" description="Low complexity" evidence="4">
    <location>
        <begin position="50"/>
        <end position="66"/>
    </location>
</feature>
<feature type="sequence variant" description="In strain: AF1, AF2, AF3, AF4, K11, K14, K16, K2, K21, K3, K5, K7, ZH1, ZH13, ZH16, ZH19, ZH2, ZH20, ZH21, ZH23, ZH25, ZH29, ZH31 and ZH33.">
    <original>T</original>
    <variation>S</variation>
    <location>
        <position position="67"/>
    </location>
</feature>
<feature type="sequence variant" description="In strain: ZH20." evidence="7">
    <original>D</original>
    <variation>V</variation>
    <location>
        <position position="71"/>
    </location>
</feature>
<feature type="sequence variant" description="In strain: wi3." evidence="7">
    <original>Q</original>
    <variation>L</variation>
    <location>
        <position position="97"/>
    </location>
</feature>
<feature type="sequence variant" description="In strain: AF1, AF2, AF3, AF4, K11, K14, K16, K2, K21, K3, K5, K7, ZH1, ZH13, ZH16, ZH19, ZH2, ZH20, ZH21, ZH23, ZH25, ZH29, ZH31 and ZH33.">
    <original>T</original>
    <variation>A</variation>
    <location>
        <position position="107"/>
    </location>
</feature>
<feature type="sequence conflict" description="In Ref. 4; AAL48544." evidence="9" ref="4">
    <original>N</original>
    <variation>D</variation>
    <location>
        <position position="24"/>
    </location>
</feature>
<feature type="sequence conflict" description="In Ref. 4; AAL48544." evidence="9" ref="4">
    <original>L</original>
    <variation>I</variation>
    <location>
        <position position="166"/>
    </location>
</feature>
<feature type="sequence conflict" description="In Ref. 5." evidence="9" ref="5">
    <original>INSEA</original>
    <variation>T</variation>
    <location>
        <begin position="203"/>
        <end position="207"/>
    </location>
</feature>
<feature type="sequence conflict" description="In Ref. 4; AAL48544." evidence="9" ref="4">
    <original>E</original>
    <variation>D</variation>
    <location>
        <position position="231"/>
    </location>
</feature>
<comment type="function">
    <text evidence="1">Potentially involved in docking of synaptic vesicles at presynaptic active zones.</text>
</comment>
<comment type="interaction">
    <interactant intactId="EBI-83666">
        <id>Q7KVY7</id>
    </interactant>
    <interactant intactId="EBI-129299">
        <id>Q9W1I8</id>
        <label>Snap29</label>
    </interactant>
    <organismsDiffer>false</organismsDiffer>
    <experiments>3</experiments>
</comment>
<comment type="subcellular location">
    <subcellularLocation>
        <location evidence="9">Membrane</location>
        <topology evidence="9">Single-pass type IV membrane protein</topology>
    </subcellularLocation>
</comment>
<comment type="similarity">
    <text evidence="9">Belongs to the syntaxin family.</text>
</comment>
<comment type="sequence caution" evidence="9">
    <conflict type="erroneous gene model prediction">
        <sequence resource="EMBL-CDS" id="CAA16817"/>
    </conflict>
</comment>
<evidence type="ECO:0000250" key="1">
    <source>
        <dbReference type="UniProtKB" id="P70452"/>
    </source>
</evidence>
<evidence type="ECO:0000255" key="2"/>
<evidence type="ECO:0000255" key="3">
    <source>
        <dbReference type="PROSITE-ProRule" id="PRU00202"/>
    </source>
</evidence>
<evidence type="ECO:0000256" key="4">
    <source>
        <dbReference type="SAM" id="MobiDB-lite"/>
    </source>
</evidence>
<evidence type="ECO:0000269" key="5">
    <source>
    </source>
</evidence>
<evidence type="ECO:0000269" key="6">
    <source>
    </source>
</evidence>
<evidence type="ECO:0000269" key="7">
    <source>
    </source>
</evidence>
<evidence type="ECO:0000269" key="8">
    <source>
    </source>
</evidence>
<evidence type="ECO:0000305" key="9"/>
<evidence type="ECO:0000312" key="10">
    <source>
        <dbReference type="EMBL" id="AAF45823.2"/>
    </source>
</evidence>
<evidence type="ECO:0000312" key="11">
    <source>
        <dbReference type="EMBL" id="AAL48544.1"/>
    </source>
</evidence>
<evidence type="ECO:0000312" key="12">
    <source>
        <dbReference type="EMBL" id="AAM18286.1"/>
    </source>
</evidence>
<evidence type="ECO:0000312" key="13">
    <source>
        <dbReference type="EMBL" id="AAM18287.1"/>
    </source>
</evidence>
<evidence type="ECO:0000312" key="14">
    <source>
        <dbReference type="EMBL" id="AAM18288.1"/>
    </source>
</evidence>
<evidence type="ECO:0000312" key="15">
    <source>
        <dbReference type="EMBL" id="AAM18289.1"/>
    </source>
</evidence>
<evidence type="ECO:0000312" key="16">
    <source>
        <dbReference type="EMBL" id="AAM18290.1"/>
    </source>
</evidence>
<evidence type="ECO:0000312" key="17">
    <source>
        <dbReference type="EMBL" id="AAM18291.1"/>
    </source>
</evidence>
<evidence type="ECO:0000312" key="18">
    <source>
        <dbReference type="EMBL" id="AAM18292.1"/>
    </source>
</evidence>
<evidence type="ECO:0000312" key="19">
    <source>
        <dbReference type="EMBL" id="AAM18293.1"/>
    </source>
</evidence>
<evidence type="ECO:0000312" key="20">
    <source>
        <dbReference type="EMBL" id="AAM18294.1"/>
    </source>
</evidence>
<evidence type="ECO:0000312" key="21">
    <source>
        <dbReference type="EMBL" id="AAM18295.1"/>
    </source>
</evidence>
<evidence type="ECO:0000312" key="22">
    <source>
        <dbReference type="EMBL" id="AAM18296.1"/>
    </source>
</evidence>
<evidence type="ECO:0000312" key="23">
    <source>
        <dbReference type="EMBL" id="AAM18297.1"/>
    </source>
</evidence>
<evidence type="ECO:0000312" key="24">
    <source>
        <dbReference type="EMBL" id="AAM18298.1"/>
    </source>
</evidence>
<evidence type="ECO:0000312" key="25">
    <source>
        <dbReference type="EMBL" id="AAM18299.1"/>
    </source>
</evidence>
<evidence type="ECO:0000312" key="26">
    <source>
        <dbReference type="EMBL" id="AAM18300.1"/>
    </source>
</evidence>
<evidence type="ECO:0000312" key="27">
    <source>
        <dbReference type="EMBL" id="AAM18301.1"/>
    </source>
</evidence>
<evidence type="ECO:0000312" key="28">
    <source>
        <dbReference type="EMBL" id="AAM18302.1"/>
    </source>
</evidence>
<evidence type="ECO:0000312" key="29">
    <source>
        <dbReference type="EMBL" id="AAM18303.1"/>
    </source>
</evidence>
<evidence type="ECO:0000312" key="30">
    <source>
        <dbReference type="EMBL" id="AAM18304.1"/>
    </source>
</evidence>
<evidence type="ECO:0000312" key="31">
    <source>
        <dbReference type="EMBL" id="AAM18305.1"/>
    </source>
</evidence>
<evidence type="ECO:0000312" key="32">
    <source>
        <dbReference type="EMBL" id="AAM18306.1"/>
    </source>
</evidence>
<evidence type="ECO:0000312" key="33">
    <source>
        <dbReference type="EMBL" id="AAM18307.1"/>
    </source>
</evidence>
<evidence type="ECO:0000312" key="34">
    <source>
        <dbReference type="EMBL" id="AAM18308.1"/>
    </source>
</evidence>
<evidence type="ECO:0000312" key="35">
    <source>
        <dbReference type="EMBL" id="AAM18309.1"/>
    </source>
</evidence>
<evidence type="ECO:0000312" key="36">
    <source>
        <dbReference type="EMBL" id="AAM18310.1"/>
    </source>
</evidence>
<evidence type="ECO:0000312" key="37">
    <source>
        <dbReference type="EMBL" id="AAM18311.1"/>
    </source>
</evidence>
<evidence type="ECO:0000312" key="38">
    <source>
        <dbReference type="EMBL" id="AAM18312.1"/>
    </source>
</evidence>
<evidence type="ECO:0000312" key="39">
    <source>
        <dbReference type="EMBL" id="AAM18313.1"/>
    </source>
</evidence>
<evidence type="ECO:0000312" key="40">
    <source>
        <dbReference type="EMBL" id="AAM18314.1"/>
    </source>
</evidence>
<evidence type="ECO:0000312" key="41">
    <source>
        <dbReference type="EMBL" id="AAM18315.1"/>
    </source>
</evidence>
<evidence type="ECO:0000312" key="42">
    <source>
        <dbReference type="EMBL" id="AAM18316.1"/>
    </source>
</evidence>
<evidence type="ECO:0000312" key="43">
    <source>
        <dbReference type="EMBL" id="AAM18317.1"/>
    </source>
</evidence>
<evidence type="ECO:0000312" key="44">
    <source>
        <dbReference type="EMBL" id="AAM18318.1"/>
    </source>
</evidence>
<evidence type="ECO:0000312" key="45">
    <source>
        <dbReference type="EMBL" id="AAM18319.1"/>
    </source>
</evidence>
<evidence type="ECO:0000312" key="46">
    <source>
        <dbReference type="EMBL" id="AAM18320.1"/>
    </source>
</evidence>
<evidence type="ECO:0000312" key="47">
    <source>
        <dbReference type="EMBL" id="AAM18322.1"/>
    </source>
</evidence>
<evidence type="ECO:0000312" key="48">
    <source>
        <dbReference type="EMBL" id="AAM18323.1"/>
    </source>
</evidence>
<evidence type="ECO:0000312" key="49">
    <source>
        <dbReference type="EMBL" id="AAM18324.1"/>
    </source>
</evidence>
<evidence type="ECO:0000312" key="50">
    <source>
        <dbReference type="EMBL" id="AAM18325.1"/>
    </source>
</evidence>
<evidence type="ECO:0000312" key="51">
    <source>
        <dbReference type="EMBL" id="AAM18326.1"/>
    </source>
</evidence>
<evidence type="ECO:0000312" key="52">
    <source>
        <dbReference type="EMBL" id="AAM18327.1"/>
    </source>
</evidence>
<evidence type="ECO:0000312" key="53">
    <source>
        <dbReference type="EMBL" id="AAM18328.1"/>
    </source>
</evidence>
<evidence type="ECO:0000312" key="54">
    <source>
        <dbReference type="EMBL" id="AAM18329.1"/>
    </source>
</evidence>
<evidence type="ECO:0000312" key="55">
    <source>
        <dbReference type="EMBL" id="AAM18330.1"/>
    </source>
</evidence>
<evidence type="ECO:0000312" key="56">
    <source>
        <dbReference type="EMBL" id="AAM18331.1"/>
    </source>
</evidence>
<evidence type="ECO:0000312" key="57">
    <source>
        <dbReference type="EMBL" id="AAM18332.1"/>
    </source>
</evidence>
<evidence type="ECO:0000312" key="58">
    <source>
        <dbReference type="EMBL" id="AAM18333.1"/>
    </source>
</evidence>
<evidence type="ECO:0000312" key="59">
    <source>
        <dbReference type="EMBL" id="AAM18334.1"/>
    </source>
</evidence>
<evidence type="ECO:0000312" key="60">
    <source>
        <dbReference type="EMBL" id="AAM18335.1"/>
    </source>
</evidence>
<evidence type="ECO:0000312" key="61">
    <source>
        <dbReference type="EMBL" id="AAM18336.1"/>
    </source>
</evidence>
<evidence type="ECO:0000312" key="62">
    <source>
        <dbReference type="EMBL" id="AAM18337.1"/>
    </source>
</evidence>
<evidence type="ECO:0000312" key="63">
    <source>
        <dbReference type="EMBL" id="AAM18338.1"/>
    </source>
</evidence>
<evidence type="ECO:0000312" key="64">
    <source>
        <dbReference type="EMBL" id="AAM18339.1"/>
    </source>
</evidence>
<evidence type="ECO:0000312" key="65">
    <source>
        <dbReference type="EMBL" id="CAA16817.1"/>
    </source>
</evidence>
<accession>Q7KVY7</accession>
<accession>O76905</accession>
<accession>Q8MM89</accession>
<accession>Q8MM91</accession>
<accession>Q8MM96</accession>
<accession>Q8MTN2</accession>
<accession>Q8MTN5</accession>
<accession>Q8SZE9</accession>
<name>STX4_DROME</name>
<organism>
    <name type="scientific">Drosophila melanogaster</name>
    <name type="common">Fruit fly</name>
    <dbReference type="NCBI Taxonomy" id="7227"/>
    <lineage>
        <taxon>Eukaryota</taxon>
        <taxon>Metazoa</taxon>
        <taxon>Ecdysozoa</taxon>
        <taxon>Arthropoda</taxon>
        <taxon>Hexapoda</taxon>
        <taxon>Insecta</taxon>
        <taxon>Pterygota</taxon>
        <taxon>Neoptera</taxon>
        <taxon>Endopterygota</taxon>
        <taxon>Diptera</taxon>
        <taxon>Brachycera</taxon>
        <taxon>Muscomorpha</taxon>
        <taxon>Ephydroidea</taxon>
        <taxon>Drosophilidae</taxon>
        <taxon>Drosophila</taxon>
        <taxon>Sophophora</taxon>
    </lineage>
</organism>
<protein>
    <recommendedName>
        <fullName>Syntaxin-4</fullName>
    </recommendedName>
</protein>
<dbReference type="EMBL" id="AE014298">
    <property type="protein sequence ID" value="AAF45823.2"/>
    <property type="molecule type" value="Genomic_DNA"/>
</dbReference>
<dbReference type="EMBL" id="AL021728">
    <property type="protein sequence ID" value="CAA16817.1"/>
    <property type="status" value="ALT_SEQ"/>
    <property type="molecule type" value="Genomic_DNA"/>
</dbReference>
<dbReference type="EMBL" id="AY070922">
    <property type="protein sequence ID" value="AAL48544.1"/>
    <property type="molecule type" value="mRNA"/>
</dbReference>
<dbReference type="EMBL" id="AY093849">
    <property type="protein sequence ID" value="AAM18260.1"/>
    <property type="molecule type" value="Genomic_DNA"/>
</dbReference>
<dbReference type="EMBL" id="AY093850">
    <property type="protein sequence ID" value="AAM18261.1"/>
    <property type="molecule type" value="Genomic_DNA"/>
</dbReference>
<dbReference type="EMBL" id="AY093851">
    <property type="protein sequence ID" value="AAM18262.1"/>
    <property type="molecule type" value="Genomic_DNA"/>
</dbReference>
<dbReference type="EMBL" id="AY093852">
    <property type="protein sequence ID" value="AAM18263.1"/>
    <property type="molecule type" value="Genomic_DNA"/>
</dbReference>
<dbReference type="EMBL" id="AY093853">
    <property type="protein sequence ID" value="AAM18264.1"/>
    <property type="molecule type" value="Genomic_DNA"/>
</dbReference>
<dbReference type="EMBL" id="AY093854">
    <property type="protein sequence ID" value="AAM18265.1"/>
    <property type="molecule type" value="Genomic_DNA"/>
</dbReference>
<dbReference type="EMBL" id="AY093856">
    <property type="protein sequence ID" value="AAM18267.1"/>
    <property type="molecule type" value="Genomic_DNA"/>
</dbReference>
<dbReference type="EMBL" id="AY093857">
    <property type="protein sequence ID" value="AAM18268.1"/>
    <property type="molecule type" value="Genomic_DNA"/>
</dbReference>
<dbReference type="EMBL" id="AY093858">
    <property type="protein sequence ID" value="AAM18269.1"/>
    <property type="molecule type" value="Genomic_DNA"/>
</dbReference>
<dbReference type="EMBL" id="AY093859">
    <property type="protein sequence ID" value="AAM18270.1"/>
    <property type="molecule type" value="Genomic_DNA"/>
</dbReference>
<dbReference type="EMBL" id="AY093860">
    <property type="protein sequence ID" value="AAM18271.1"/>
    <property type="molecule type" value="Genomic_DNA"/>
</dbReference>
<dbReference type="EMBL" id="AY093861">
    <property type="protein sequence ID" value="AAM18272.1"/>
    <property type="molecule type" value="Genomic_DNA"/>
</dbReference>
<dbReference type="EMBL" id="AY093862">
    <property type="protein sequence ID" value="AAM18273.1"/>
    <property type="molecule type" value="Genomic_DNA"/>
</dbReference>
<dbReference type="EMBL" id="AY093863">
    <property type="protein sequence ID" value="AAM18274.1"/>
    <property type="molecule type" value="Genomic_DNA"/>
</dbReference>
<dbReference type="EMBL" id="AY093864">
    <property type="protein sequence ID" value="AAM18275.1"/>
    <property type="molecule type" value="Genomic_DNA"/>
</dbReference>
<dbReference type="EMBL" id="AY093865">
    <property type="protein sequence ID" value="AAM18276.1"/>
    <property type="molecule type" value="Genomic_DNA"/>
</dbReference>
<dbReference type="EMBL" id="AY093866">
    <property type="protein sequence ID" value="AAM18277.1"/>
    <property type="molecule type" value="Genomic_DNA"/>
</dbReference>
<dbReference type="EMBL" id="AY093867">
    <property type="protein sequence ID" value="AAM18278.1"/>
    <property type="molecule type" value="Genomic_DNA"/>
</dbReference>
<dbReference type="EMBL" id="AY093868">
    <property type="protein sequence ID" value="AAM18279.1"/>
    <property type="molecule type" value="Genomic_DNA"/>
</dbReference>
<dbReference type="EMBL" id="AY093870">
    <property type="protein sequence ID" value="AAM18281.1"/>
    <property type="molecule type" value="Genomic_DNA"/>
</dbReference>
<dbReference type="EMBL" id="AY093871">
    <property type="protein sequence ID" value="AAM18282.1"/>
    <property type="molecule type" value="Genomic_DNA"/>
</dbReference>
<dbReference type="EMBL" id="AY093872">
    <property type="protein sequence ID" value="AAM18283.1"/>
    <property type="molecule type" value="Genomic_DNA"/>
</dbReference>
<dbReference type="EMBL" id="AY093873">
    <property type="protein sequence ID" value="AAM18284.1"/>
    <property type="molecule type" value="Genomic_DNA"/>
</dbReference>
<dbReference type="EMBL" id="AY093875">
    <property type="protein sequence ID" value="AAM18286.1"/>
    <property type="molecule type" value="Genomic_DNA"/>
</dbReference>
<dbReference type="EMBL" id="AY093876">
    <property type="protein sequence ID" value="AAM18287.1"/>
    <property type="molecule type" value="Genomic_DNA"/>
</dbReference>
<dbReference type="EMBL" id="AY093877">
    <property type="protein sequence ID" value="AAM18288.1"/>
    <property type="molecule type" value="Genomic_DNA"/>
</dbReference>
<dbReference type="EMBL" id="AY093878">
    <property type="protein sequence ID" value="AAM18289.1"/>
    <property type="molecule type" value="Genomic_DNA"/>
</dbReference>
<dbReference type="EMBL" id="AY093879">
    <property type="protein sequence ID" value="AAM18290.1"/>
    <property type="molecule type" value="Genomic_DNA"/>
</dbReference>
<dbReference type="EMBL" id="AY093880">
    <property type="protein sequence ID" value="AAM18291.1"/>
    <property type="molecule type" value="Genomic_DNA"/>
</dbReference>
<dbReference type="EMBL" id="AY093881">
    <property type="protein sequence ID" value="AAM18292.1"/>
    <property type="molecule type" value="Genomic_DNA"/>
</dbReference>
<dbReference type="EMBL" id="AY093882">
    <property type="protein sequence ID" value="AAM18293.1"/>
    <property type="molecule type" value="Genomic_DNA"/>
</dbReference>
<dbReference type="EMBL" id="AY093883">
    <property type="protein sequence ID" value="AAM18294.1"/>
    <property type="molecule type" value="Genomic_DNA"/>
</dbReference>
<dbReference type="EMBL" id="AY093884">
    <property type="protein sequence ID" value="AAM18295.1"/>
    <property type="molecule type" value="Genomic_DNA"/>
</dbReference>
<dbReference type="EMBL" id="AY093885">
    <property type="protein sequence ID" value="AAM18296.1"/>
    <property type="molecule type" value="Genomic_DNA"/>
</dbReference>
<dbReference type="EMBL" id="AY093886">
    <property type="protein sequence ID" value="AAM18297.1"/>
    <property type="molecule type" value="Genomic_DNA"/>
</dbReference>
<dbReference type="EMBL" id="AY093887">
    <property type="protein sequence ID" value="AAM18298.1"/>
    <property type="molecule type" value="Genomic_DNA"/>
</dbReference>
<dbReference type="EMBL" id="AY093888">
    <property type="protein sequence ID" value="AAM18299.1"/>
    <property type="molecule type" value="Genomic_DNA"/>
</dbReference>
<dbReference type="EMBL" id="AY093889">
    <property type="protein sequence ID" value="AAM18300.1"/>
    <property type="molecule type" value="Genomic_DNA"/>
</dbReference>
<dbReference type="EMBL" id="AY093890">
    <property type="protein sequence ID" value="AAM18301.1"/>
    <property type="molecule type" value="Genomic_DNA"/>
</dbReference>
<dbReference type="EMBL" id="AY093891">
    <property type="protein sequence ID" value="AAM18302.1"/>
    <property type="molecule type" value="Genomic_DNA"/>
</dbReference>
<dbReference type="EMBL" id="AY093892">
    <property type="protein sequence ID" value="AAM18303.1"/>
    <property type="molecule type" value="Genomic_DNA"/>
</dbReference>
<dbReference type="EMBL" id="AY093893">
    <property type="protein sequence ID" value="AAM18304.1"/>
    <property type="molecule type" value="Genomic_DNA"/>
</dbReference>
<dbReference type="EMBL" id="AY093894">
    <property type="protein sequence ID" value="AAM18305.1"/>
    <property type="molecule type" value="Genomic_DNA"/>
</dbReference>
<dbReference type="EMBL" id="AY093895">
    <property type="protein sequence ID" value="AAM18306.1"/>
    <property type="molecule type" value="Genomic_DNA"/>
</dbReference>
<dbReference type="EMBL" id="AY093896">
    <property type="protein sequence ID" value="AAM18307.1"/>
    <property type="molecule type" value="Genomic_DNA"/>
</dbReference>
<dbReference type="EMBL" id="AY093897">
    <property type="protein sequence ID" value="AAM18308.1"/>
    <property type="molecule type" value="Genomic_DNA"/>
</dbReference>
<dbReference type="EMBL" id="AY093898">
    <property type="protein sequence ID" value="AAM18309.1"/>
    <property type="molecule type" value="Genomic_DNA"/>
</dbReference>
<dbReference type="EMBL" id="AY093899">
    <property type="protein sequence ID" value="AAM18310.1"/>
    <property type="molecule type" value="Genomic_DNA"/>
</dbReference>
<dbReference type="EMBL" id="AY093900">
    <property type="protein sequence ID" value="AAM18311.1"/>
    <property type="molecule type" value="Genomic_DNA"/>
</dbReference>
<dbReference type="EMBL" id="AY093901">
    <property type="protein sequence ID" value="AAM18312.1"/>
    <property type="molecule type" value="Genomic_DNA"/>
</dbReference>
<dbReference type="EMBL" id="AY093902">
    <property type="protein sequence ID" value="AAM18313.1"/>
    <property type="molecule type" value="Genomic_DNA"/>
</dbReference>
<dbReference type="EMBL" id="AY093903">
    <property type="protein sequence ID" value="AAM18314.1"/>
    <property type="molecule type" value="Genomic_DNA"/>
</dbReference>
<dbReference type="EMBL" id="AY093904">
    <property type="protein sequence ID" value="AAM18315.1"/>
    <property type="molecule type" value="Genomic_DNA"/>
</dbReference>
<dbReference type="EMBL" id="AY093905">
    <property type="protein sequence ID" value="AAM18316.1"/>
    <property type="molecule type" value="Genomic_DNA"/>
</dbReference>
<dbReference type="EMBL" id="AY093906">
    <property type="protein sequence ID" value="AAM18317.1"/>
    <property type="molecule type" value="Genomic_DNA"/>
</dbReference>
<dbReference type="EMBL" id="AY093907">
    <property type="protein sequence ID" value="AAM18318.1"/>
    <property type="molecule type" value="Genomic_DNA"/>
</dbReference>
<dbReference type="EMBL" id="AY093908">
    <property type="protein sequence ID" value="AAM18319.1"/>
    <property type="molecule type" value="Genomic_DNA"/>
</dbReference>
<dbReference type="EMBL" id="AY093909">
    <property type="protein sequence ID" value="AAM18320.1"/>
    <property type="molecule type" value="Genomic_DNA"/>
</dbReference>
<dbReference type="EMBL" id="AY093911">
    <property type="protein sequence ID" value="AAM18322.1"/>
    <property type="molecule type" value="Genomic_DNA"/>
</dbReference>
<dbReference type="EMBL" id="AY093912">
    <property type="protein sequence ID" value="AAM18323.1"/>
    <property type="molecule type" value="Genomic_DNA"/>
</dbReference>
<dbReference type="EMBL" id="AY093913">
    <property type="protein sequence ID" value="AAM18324.1"/>
    <property type="molecule type" value="Genomic_DNA"/>
</dbReference>
<dbReference type="EMBL" id="AY093914">
    <property type="protein sequence ID" value="AAM18325.1"/>
    <property type="molecule type" value="Genomic_DNA"/>
</dbReference>
<dbReference type="EMBL" id="AY093915">
    <property type="protein sequence ID" value="AAM18326.1"/>
    <property type="molecule type" value="Genomic_DNA"/>
</dbReference>
<dbReference type="EMBL" id="AY093916">
    <property type="protein sequence ID" value="AAM18327.1"/>
    <property type="molecule type" value="Genomic_DNA"/>
</dbReference>
<dbReference type="EMBL" id="AY093917">
    <property type="protein sequence ID" value="AAM18328.1"/>
    <property type="molecule type" value="Genomic_DNA"/>
</dbReference>
<dbReference type="EMBL" id="AY093918">
    <property type="protein sequence ID" value="AAM18329.1"/>
    <property type="molecule type" value="Genomic_DNA"/>
</dbReference>
<dbReference type="EMBL" id="AY093919">
    <property type="protein sequence ID" value="AAM18330.1"/>
    <property type="molecule type" value="Genomic_DNA"/>
</dbReference>
<dbReference type="EMBL" id="AY093920">
    <property type="protein sequence ID" value="AAM18331.1"/>
    <property type="molecule type" value="Genomic_DNA"/>
</dbReference>
<dbReference type="EMBL" id="AY093921">
    <property type="protein sequence ID" value="AAM18332.1"/>
    <property type="molecule type" value="Genomic_DNA"/>
</dbReference>
<dbReference type="EMBL" id="AY093922">
    <property type="protein sequence ID" value="AAM18333.1"/>
    <property type="molecule type" value="Genomic_DNA"/>
</dbReference>
<dbReference type="EMBL" id="AY093923">
    <property type="protein sequence ID" value="AAM18334.1"/>
    <property type="molecule type" value="Genomic_DNA"/>
</dbReference>
<dbReference type="EMBL" id="AY093924">
    <property type="protein sequence ID" value="AAM18335.1"/>
    <property type="molecule type" value="Genomic_DNA"/>
</dbReference>
<dbReference type="EMBL" id="AY093925">
    <property type="protein sequence ID" value="AAM18336.1"/>
    <property type="molecule type" value="Genomic_DNA"/>
</dbReference>
<dbReference type="EMBL" id="AY093926">
    <property type="protein sequence ID" value="AAM18337.1"/>
    <property type="molecule type" value="Genomic_DNA"/>
</dbReference>
<dbReference type="EMBL" id="AY093927">
    <property type="protein sequence ID" value="AAM18338.1"/>
    <property type="molecule type" value="Genomic_DNA"/>
</dbReference>
<dbReference type="EMBL" id="AY093928">
    <property type="protein sequence ID" value="AAM18339.1"/>
    <property type="molecule type" value="Genomic_DNA"/>
</dbReference>
<dbReference type="PIR" id="T13654">
    <property type="entry name" value="T13654"/>
</dbReference>
<dbReference type="RefSeq" id="NP_525057.2">
    <property type="nucleotide sequence ID" value="NM_080318.3"/>
</dbReference>
<dbReference type="SMR" id="Q7KVY7"/>
<dbReference type="BioGRID" id="57800">
    <property type="interactions" value="23"/>
</dbReference>
<dbReference type="FunCoup" id="Q7KVY7">
    <property type="interactions" value="1"/>
</dbReference>
<dbReference type="IntAct" id="Q7KVY7">
    <property type="interactions" value="18"/>
</dbReference>
<dbReference type="STRING" id="7227.FBpp0070471"/>
<dbReference type="PaxDb" id="7227-FBpp0070471"/>
<dbReference type="DNASU" id="31269"/>
<dbReference type="EnsemblMetazoa" id="FBtr0070494">
    <property type="protein sequence ID" value="FBpp0070471"/>
    <property type="gene ID" value="FBgn0024980"/>
</dbReference>
<dbReference type="GeneID" id="31269"/>
<dbReference type="KEGG" id="dme:Dmel_CG2715"/>
<dbReference type="AGR" id="FB:FBgn0024980"/>
<dbReference type="CTD" id="31269"/>
<dbReference type="FlyBase" id="FBgn0024980">
    <property type="gene designation" value="Syx4"/>
</dbReference>
<dbReference type="VEuPathDB" id="VectorBase:FBgn0024980"/>
<dbReference type="eggNOG" id="KOG0810">
    <property type="taxonomic scope" value="Eukaryota"/>
</dbReference>
<dbReference type="InParanoid" id="Q7KVY7"/>
<dbReference type="OMA" id="YYEHVNA"/>
<dbReference type="OrthoDB" id="10255013at2759"/>
<dbReference type="PhylomeDB" id="Q7KVY7"/>
<dbReference type="BioGRID-ORCS" id="31269">
    <property type="hits" value="0 hits in 1 CRISPR screen"/>
</dbReference>
<dbReference type="GenomeRNAi" id="31269"/>
<dbReference type="PRO" id="PR:Q7KVY7"/>
<dbReference type="Proteomes" id="UP000000803">
    <property type="component" value="Chromosome X"/>
</dbReference>
<dbReference type="Bgee" id="FBgn0024980">
    <property type="expression patterns" value="Expressed in adult Malpighian tubule principal cell of lower ureter in Malpighian tubule and 104 other cell types or tissues"/>
</dbReference>
<dbReference type="ExpressionAtlas" id="Q7KVY7">
    <property type="expression patterns" value="baseline and differential"/>
</dbReference>
<dbReference type="GO" id="GO:0005737">
    <property type="term" value="C:cytoplasm"/>
    <property type="evidence" value="ECO:0000250"/>
    <property type="project" value="UniProtKB"/>
</dbReference>
<dbReference type="GO" id="GO:0012505">
    <property type="term" value="C:endomembrane system"/>
    <property type="evidence" value="ECO:0000318"/>
    <property type="project" value="GO_Central"/>
</dbReference>
<dbReference type="GO" id="GO:0005886">
    <property type="term" value="C:plasma membrane"/>
    <property type="evidence" value="ECO:0000250"/>
    <property type="project" value="UniProtKB"/>
</dbReference>
<dbReference type="GO" id="GO:0045211">
    <property type="term" value="C:postsynaptic membrane"/>
    <property type="evidence" value="ECO:0000314"/>
    <property type="project" value="FlyBase"/>
</dbReference>
<dbReference type="GO" id="GO:0098793">
    <property type="term" value="C:presynapse"/>
    <property type="evidence" value="ECO:0007669"/>
    <property type="project" value="GOC"/>
</dbReference>
<dbReference type="GO" id="GO:0031201">
    <property type="term" value="C:SNARE complex"/>
    <property type="evidence" value="ECO:0000250"/>
    <property type="project" value="FlyBase"/>
</dbReference>
<dbReference type="GO" id="GO:0005484">
    <property type="term" value="F:SNAP receptor activity"/>
    <property type="evidence" value="ECO:0000250"/>
    <property type="project" value="FlyBase"/>
</dbReference>
<dbReference type="GO" id="GO:0000149">
    <property type="term" value="F:SNARE binding"/>
    <property type="evidence" value="ECO:0000250"/>
    <property type="project" value="FlyBase"/>
</dbReference>
<dbReference type="GO" id="GO:0006887">
    <property type="term" value="P:exocytosis"/>
    <property type="evidence" value="ECO:0000318"/>
    <property type="project" value="GO_Central"/>
</dbReference>
<dbReference type="GO" id="GO:0006886">
    <property type="term" value="P:intracellular protein transport"/>
    <property type="evidence" value="ECO:0000318"/>
    <property type="project" value="GO_Central"/>
</dbReference>
<dbReference type="GO" id="GO:0061025">
    <property type="term" value="P:membrane fusion"/>
    <property type="evidence" value="ECO:0000250"/>
    <property type="project" value="FlyBase"/>
</dbReference>
<dbReference type="GO" id="GO:0008582">
    <property type="term" value="P:regulation of synaptic assembly at neuromuscular junction"/>
    <property type="evidence" value="ECO:0000315"/>
    <property type="project" value="FlyBase"/>
</dbReference>
<dbReference type="GO" id="GO:0098917">
    <property type="term" value="P:retrograde trans-synaptic signaling"/>
    <property type="evidence" value="ECO:0000315"/>
    <property type="project" value="FlyBase"/>
</dbReference>
<dbReference type="GO" id="GO:0016081">
    <property type="term" value="P:synaptic vesicle docking"/>
    <property type="evidence" value="ECO:0000250"/>
    <property type="project" value="FlyBase"/>
</dbReference>
<dbReference type="GO" id="GO:0048278">
    <property type="term" value="P:vesicle docking"/>
    <property type="evidence" value="ECO:0000318"/>
    <property type="project" value="GO_Central"/>
</dbReference>
<dbReference type="GO" id="GO:0006906">
    <property type="term" value="P:vesicle fusion"/>
    <property type="evidence" value="ECO:0000318"/>
    <property type="project" value="GO_Central"/>
</dbReference>
<dbReference type="GO" id="GO:0016192">
    <property type="term" value="P:vesicle-mediated transport"/>
    <property type="evidence" value="ECO:0000250"/>
    <property type="project" value="FlyBase"/>
</dbReference>
<dbReference type="CDD" id="cd15848">
    <property type="entry name" value="SNARE_syntaxin1-like"/>
    <property type="match status" value="1"/>
</dbReference>
<dbReference type="FunFam" id="1.20.5.110:FF:000083">
    <property type="entry name" value="syntaxin-4 isoform X2"/>
    <property type="match status" value="1"/>
</dbReference>
<dbReference type="Gene3D" id="1.20.58.70">
    <property type="match status" value="1"/>
</dbReference>
<dbReference type="InterPro" id="IPR010989">
    <property type="entry name" value="SNARE"/>
</dbReference>
<dbReference type="InterPro" id="IPR045242">
    <property type="entry name" value="Syntaxin"/>
</dbReference>
<dbReference type="InterPro" id="IPR000727">
    <property type="entry name" value="T_SNARE_dom"/>
</dbReference>
<dbReference type="PANTHER" id="PTHR19957">
    <property type="entry name" value="SYNTAXIN"/>
    <property type="match status" value="1"/>
</dbReference>
<dbReference type="PANTHER" id="PTHR19957:SF19">
    <property type="entry name" value="SYNTAXIN-4"/>
    <property type="match status" value="1"/>
</dbReference>
<dbReference type="Pfam" id="PF05739">
    <property type="entry name" value="SNARE"/>
    <property type="match status" value="1"/>
</dbReference>
<dbReference type="SMART" id="SM00397">
    <property type="entry name" value="t_SNARE"/>
    <property type="match status" value="1"/>
</dbReference>
<dbReference type="SUPFAM" id="SSF47661">
    <property type="entry name" value="t-snare proteins"/>
    <property type="match status" value="1"/>
</dbReference>
<dbReference type="PROSITE" id="PS50192">
    <property type="entry name" value="T_SNARE"/>
    <property type="match status" value="1"/>
</dbReference>
<gene>
    <name evidence="10" type="primary">Syx4</name>
    <name type="ORF">CG2715</name>
</gene>
<reference evidence="10" key="1">
    <citation type="journal article" date="2000" name="Science">
        <title>The genome sequence of Drosophila melanogaster.</title>
        <authorList>
            <person name="Adams M.D."/>
            <person name="Celniker S.E."/>
            <person name="Holt R.A."/>
            <person name="Evans C.A."/>
            <person name="Gocayne J.D."/>
            <person name="Amanatides P.G."/>
            <person name="Scherer S.E."/>
            <person name="Li P.W."/>
            <person name="Hoskins R.A."/>
            <person name="Galle R.F."/>
            <person name="George R.A."/>
            <person name="Lewis S.E."/>
            <person name="Richards S."/>
            <person name="Ashburner M."/>
            <person name="Henderson S.N."/>
            <person name="Sutton G.G."/>
            <person name="Wortman J.R."/>
            <person name="Yandell M.D."/>
            <person name="Zhang Q."/>
            <person name="Chen L.X."/>
            <person name="Brandon R.C."/>
            <person name="Rogers Y.-H.C."/>
            <person name="Blazej R.G."/>
            <person name="Champe M."/>
            <person name="Pfeiffer B.D."/>
            <person name="Wan K.H."/>
            <person name="Doyle C."/>
            <person name="Baxter E.G."/>
            <person name="Helt G."/>
            <person name="Nelson C.R."/>
            <person name="Miklos G.L.G."/>
            <person name="Abril J.F."/>
            <person name="Agbayani A."/>
            <person name="An H.-J."/>
            <person name="Andrews-Pfannkoch C."/>
            <person name="Baldwin D."/>
            <person name="Ballew R.M."/>
            <person name="Basu A."/>
            <person name="Baxendale J."/>
            <person name="Bayraktaroglu L."/>
            <person name="Beasley E.M."/>
            <person name="Beeson K.Y."/>
            <person name="Benos P.V."/>
            <person name="Berman B.P."/>
            <person name="Bhandari D."/>
            <person name="Bolshakov S."/>
            <person name="Borkova D."/>
            <person name="Botchan M.R."/>
            <person name="Bouck J."/>
            <person name="Brokstein P."/>
            <person name="Brottier P."/>
            <person name="Burtis K.C."/>
            <person name="Busam D.A."/>
            <person name="Butler H."/>
            <person name="Cadieu E."/>
            <person name="Center A."/>
            <person name="Chandra I."/>
            <person name="Cherry J.M."/>
            <person name="Cawley S."/>
            <person name="Dahlke C."/>
            <person name="Davenport L.B."/>
            <person name="Davies P."/>
            <person name="de Pablos B."/>
            <person name="Delcher A."/>
            <person name="Deng Z."/>
            <person name="Mays A.D."/>
            <person name="Dew I."/>
            <person name="Dietz S.M."/>
            <person name="Dodson K."/>
            <person name="Doup L.E."/>
            <person name="Downes M."/>
            <person name="Dugan-Rocha S."/>
            <person name="Dunkov B.C."/>
            <person name="Dunn P."/>
            <person name="Durbin K.J."/>
            <person name="Evangelista C.C."/>
            <person name="Ferraz C."/>
            <person name="Ferriera S."/>
            <person name="Fleischmann W."/>
            <person name="Fosler C."/>
            <person name="Gabrielian A.E."/>
            <person name="Garg N.S."/>
            <person name="Gelbart W.M."/>
            <person name="Glasser K."/>
            <person name="Glodek A."/>
            <person name="Gong F."/>
            <person name="Gorrell J.H."/>
            <person name="Gu Z."/>
            <person name="Guan P."/>
            <person name="Harris M."/>
            <person name="Harris N.L."/>
            <person name="Harvey D.A."/>
            <person name="Heiman T.J."/>
            <person name="Hernandez J.R."/>
            <person name="Houck J."/>
            <person name="Hostin D."/>
            <person name="Houston K.A."/>
            <person name="Howland T.J."/>
            <person name="Wei M.-H."/>
            <person name="Ibegwam C."/>
            <person name="Jalali M."/>
            <person name="Kalush F."/>
            <person name="Karpen G.H."/>
            <person name="Ke Z."/>
            <person name="Kennison J.A."/>
            <person name="Ketchum K.A."/>
            <person name="Kimmel B.E."/>
            <person name="Kodira C.D."/>
            <person name="Kraft C.L."/>
            <person name="Kravitz S."/>
            <person name="Kulp D."/>
            <person name="Lai Z."/>
            <person name="Lasko P."/>
            <person name="Lei Y."/>
            <person name="Levitsky A.A."/>
            <person name="Li J.H."/>
            <person name="Li Z."/>
            <person name="Liang Y."/>
            <person name="Lin X."/>
            <person name="Liu X."/>
            <person name="Mattei B."/>
            <person name="McIntosh T.C."/>
            <person name="McLeod M.P."/>
            <person name="McPherson D."/>
            <person name="Merkulov G."/>
            <person name="Milshina N.V."/>
            <person name="Mobarry C."/>
            <person name="Morris J."/>
            <person name="Moshrefi A."/>
            <person name="Mount S.M."/>
            <person name="Moy M."/>
            <person name="Murphy B."/>
            <person name="Murphy L."/>
            <person name="Muzny D.M."/>
            <person name="Nelson D.L."/>
            <person name="Nelson D.R."/>
            <person name="Nelson K.A."/>
            <person name="Nixon K."/>
            <person name="Nusskern D.R."/>
            <person name="Pacleb J.M."/>
            <person name="Palazzolo M."/>
            <person name="Pittman G.S."/>
            <person name="Pan S."/>
            <person name="Pollard J."/>
            <person name="Puri V."/>
            <person name="Reese M.G."/>
            <person name="Reinert K."/>
            <person name="Remington K."/>
            <person name="Saunders R.D.C."/>
            <person name="Scheeler F."/>
            <person name="Shen H."/>
            <person name="Shue B.C."/>
            <person name="Siden-Kiamos I."/>
            <person name="Simpson M."/>
            <person name="Skupski M.P."/>
            <person name="Smith T.J."/>
            <person name="Spier E."/>
            <person name="Spradling A.C."/>
            <person name="Stapleton M."/>
            <person name="Strong R."/>
            <person name="Sun E."/>
            <person name="Svirskas R."/>
            <person name="Tector C."/>
            <person name="Turner R."/>
            <person name="Venter E."/>
            <person name="Wang A.H."/>
            <person name="Wang X."/>
            <person name="Wang Z.-Y."/>
            <person name="Wassarman D.A."/>
            <person name="Weinstock G.M."/>
            <person name="Weissenbach J."/>
            <person name="Williams S.M."/>
            <person name="Woodage T."/>
            <person name="Worley K.C."/>
            <person name="Wu D."/>
            <person name="Yang S."/>
            <person name="Yao Q.A."/>
            <person name="Ye J."/>
            <person name="Yeh R.-F."/>
            <person name="Zaveri J.S."/>
            <person name="Zhan M."/>
            <person name="Zhang G."/>
            <person name="Zhao Q."/>
            <person name="Zheng L."/>
            <person name="Zheng X.H."/>
            <person name="Zhong F.N."/>
            <person name="Zhong W."/>
            <person name="Zhou X."/>
            <person name="Zhu S.C."/>
            <person name="Zhu X."/>
            <person name="Smith H.O."/>
            <person name="Gibbs R.A."/>
            <person name="Myers E.W."/>
            <person name="Rubin G.M."/>
            <person name="Venter J.C."/>
        </authorList>
    </citation>
    <scope>NUCLEOTIDE SEQUENCE [LARGE SCALE GENOMIC DNA]</scope>
    <source>
        <strain evidence="5">Berkeley</strain>
    </source>
</reference>
<reference evidence="9 10" key="2">
    <citation type="journal article" date="2002" name="Genome Biol.">
        <title>Annotation of the Drosophila melanogaster euchromatic genome: a systematic review.</title>
        <authorList>
            <person name="Misra S."/>
            <person name="Crosby M.A."/>
            <person name="Mungall C.J."/>
            <person name="Matthews B.B."/>
            <person name="Campbell K.S."/>
            <person name="Hradecky P."/>
            <person name="Huang Y."/>
            <person name="Kaminker J.S."/>
            <person name="Millburn G.H."/>
            <person name="Prochnik S.E."/>
            <person name="Smith C.D."/>
            <person name="Tupy J.L."/>
            <person name="Whitfield E.J."/>
            <person name="Bayraktaroglu L."/>
            <person name="Berman B.P."/>
            <person name="Bettencourt B.R."/>
            <person name="Celniker S.E."/>
            <person name="de Grey A.D.N.J."/>
            <person name="Drysdale R.A."/>
            <person name="Harris N.L."/>
            <person name="Richter J."/>
            <person name="Russo S."/>
            <person name="Schroeder A.J."/>
            <person name="Shu S.Q."/>
            <person name="Stapleton M."/>
            <person name="Yamada C."/>
            <person name="Ashburner M."/>
            <person name="Gelbart W.M."/>
            <person name="Rubin G.M."/>
            <person name="Lewis S.E."/>
        </authorList>
    </citation>
    <scope>GENOME REANNOTATION</scope>
    <source>
        <strain>Berkeley</strain>
    </source>
</reference>
<reference evidence="9 65" key="3">
    <citation type="journal article" date="2000" name="Science">
        <title>From sequence to chromosome: the tip of the X chromosome of D. melanogaster.</title>
        <authorList>
            <person name="Benos P.V."/>
            <person name="Gatt M.K."/>
            <person name="Ashburner M."/>
            <person name="Murphy L."/>
            <person name="Harris D."/>
            <person name="Barrell B.G."/>
            <person name="Ferraz C."/>
            <person name="Vidal S."/>
            <person name="Brun C."/>
            <person name="Demailles J."/>
            <person name="Cadieu E."/>
            <person name="Dreano S."/>
            <person name="Gloux S."/>
            <person name="Lelaure V."/>
            <person name="Mottier S."/>
            <person name="Galibert F."/>
            <person name="Borkova D."/>
            <person name="Minana B."/>
            <person name="Kafatos F.C."/>
            <person name="Louis C."/>
            <person name="Siden-Kiamos I."/>
            <person name="Bolshakov S."/>
            <person name="Papagiannakis G."/>
            <person name="Spanos L."/>
            <person name="Cox S."/>
            <person name="Madueno E."/>
            <person name="de Pablos B."/>
            <person name="Modolell J."/>
            <person name="Peter A."/>
            <person name="Schoettler P."/>
            <person name="Werner M."/>
            <person name="Mourkioti F."/>
            <person name="Beinert N."/>
            <person name="Dowe G."/>
            <person name="Schaefer U."/>
            <person name="Jaeckle H."/>
            <person name="Bucheton A."/>
            <person name="Callister D.M."/>
            <person name="Campbell L.A."/>
            <person name="Darlamitsou A."/>
            <person name="Henderson N.S."/>
            <person name="McMillan P.J."/>
            <person name="Salles C."/>
            <person name="Tait E.A."/>
            <person name="Valenti P."/>
            <person name="Saunders R.D.C."/>
            <person name="Glover D.M."/>
        </authorList>
    </citation>
    <scope>NUCLEOTIDE SEQUENCE [LARGE SCALE GENOMIC DNA]</scope>
    <source>
        <strain evidence="6">Oregon-R</strain>
    </source>
</reference>
<reference evidence="9 11" key="4">
    <citation type="journal article" date="2002" name="Genome Biol.">
        <title>A Drosophila full-length cDNA resource.</title>
        <authorList>
            <person name="Stapleton M."/>
            <person name="Carlson J.W."/>
            <person name="Brokstein P."/>
            <person name="Yu C."/>
            <person name="Champe M."/>
            <person name="George R.A."/>
            <person name="Guarin H."/>
            <person name="Kronmiller B."/>
            <person name="Pacleb J.M."/>
            <person name="Park S."/>
            <person name="Wan K.H."/>
            <person name="Rubin G.M."/>
            <person name="Celniker S.E."/>
        </authorList>
    </citation>
    <scope>NUCLEOTIDE SEQUENCE [LARGE SCALE MRNA]</scope>
    <source>
        <strain evidence="8">Berkeley</strain>
        <tissue evidence="8">Embryo</tissue>
    </source>
</reference>
<reference evidence="9 12" key="5">
    <citation type="journal article" date="2002" name="Proc. Natl. Acad. Sci. U.S.A.">
        <title>Hitchhiking mapping: a population-based fine-mapping strategy for adaptive mutations in Drosophilamelanogaster.</title>
        <authorList>
            <person name="Harr B."/>
            <person name="Kauer M."/>
            <person name="Schloetterer C."/>
        </authorList>
    </citation>
    <scope>NUCLEOTIDE SEQUENCE [GENOMIC DNA] OF 16-215</scope>
    <source>
        <strain evidence="62">AF1</strain>
        <strain evidence="50">AF2</strain>
        <strain evidence="58">AF3</strain>
        <strain evidence="60">AF4</strain>
        <strain evidence="41">K11</strain>
        <strain evidence="42">K14</strain>
        <strain evidence="43">K16</strain>
        <strain evidence="44">K2</strain>
        <strain evidence="45">K21</strain>
        <strain evidence="46">K3</strain>
        <strain evidence="47">K5</strain>
        <strain evidence="48">K7</strain>
        <strain evidence="14">wi</strain>
        <strain evidence="12">wi1</strain>
        <strain evidence="13">wi10</strain>
        <strain evidence="15">wi13</strain>
        <strain evidence="16">wi14</strain>
        <strain evidence="17">wi15</strain>
        <strain evidence="18">wi16</strain>
        <strain evidence="19">wi17</strain>
        <strain evidence="20">wi18</strain>
        <strain evidence="21">wi2</strain>
        <strain evidence="22">wi20</strain>
        <strain evidence="23">wi21</strain>
        <strain evidence="24">wi23</strain>
        <strain evidence="25">wi24</strain>
        <strain evidence="26">wi25</strain>
        <strain evidence="27">wi27</strain>
        <strain evidence="28">wi28</strain>
        <strain evidence="29">wi29</strain>
        <strain evidence="30">wi3</strain>
        <strain evidence="31">wi30</strain>
        <strain evidence="32">wi31</strain>
        <strain evidence="33">wi32</strain>
        <strain evidence="34">wi33</strain>
        <strain evidence="35">wi4</strain>
        <strain evidence="36">wi5</strain>
        <strain evidence="37">wi6</strain>
        <strain evidence="38">wi7</strain>
        <strain evidence="39">wi8</strain>
        <strain evidence="40">wi9</strain>
        <strain evidence="49">ZH1</strain>
        <strain evidence="51">ZH13</strain>
        <strain evidence="52">ZH16</strain>
        <strain evidence="53">ZH19</strain>
        <strain evidence="54">ZH2</strain>
        <strain evidence="55">ZH20</strain>
        <strain evidence="56">ZH21</strain>
        <strain evidence="57">ZH23</strain>
        <strain evidence="59">ZH25</strain>
        <strain evidence="61">ZH29</strain>
        <strain evidence="63">ZH31</strain>
        <strain evidence="64">ZH33</strain>
    </source>
</reference>
<sequence>MGKDRLPELLQRSLSTNSSNSSSNGSLLLNVYSGTTEFIIGNTGGNNNSYSVVSQNSHSCSNNNSSTEPKDRSSSKMTQYGSNVDDILNPYTEIRQQLAQIAANLETMNRMAQTVNLRTFNENEMDELHNKNLRLGNQLMTRFNDFKANLPAENDYSLEARMKRTLFYGLHQTFINLWHKNELFLQNYETKVKKNLRLHTKIINSEASEQEIELLIENKTTKLFVDNFLQETEKERQTLREMMDRFNELRRLEKSIEEVHALFMRIQTLVMEQSEVIQRVEFHAQQATLHVDKGADELDQAEQHQKKARKKKIMLIVILAAVLLVLLLVGIYL</sequence>
<keyword id="KW-0175">Coiled coil</keyword>
<keyword id="KW-0472">Membrane</keyword>
<keyword id="KW-0532">Neurotransmitter transport</keyword>
<keyword id="KW-1185">Reference proteome</keyword>
<keyword id="KW-0812">Transmembrane</keyword>
<keyword id="KW-1133">Transmembrane helix</keyword>
<keyword id="KW-0813">Transport</keyword>
<proteinExistence type="evidence at protein level"/>